<dbReference type="EMBL" id="J03375">
    <property type="protein sequence ID" value="AAA72194.1"/>
    <property type="molecule type" value="Genomic_DNA"/>
</dbReference>
<dbReference type="SMR" id="P12974"/>
<dbReference type="GO" id="GO:0015948">
    <property type="term" value="P:methanogenesis"/>
    <property type="evidence" value="ECO:0007669"/>
    <property type="project" value="UniProtKB-KW"/>
</dbReference>
<dbReference type="InterPro" id="IPR003901">
    <property type="entry name" value="Me_CoM_Rdtase_D"/>
</dbReference>
<dbReference type="NCBIfam" id="TIGR03260">
    <property type="entry name" value="met_CoM_red_D"/>
    <property type="match status" value="1"/>
</dbReference>
<dbReference type="Pfam" id="PF02505">
    <property type="entry name" value="MCR_D"/>
    <property type="match status" value="1"/>
</dbReference>
<dbReference type="PIRSF" id="PIRSF005636">
    <property type="entry name" value="McrD"/>
    <property type="match status" value="1"/>
</dbReference>
<organism>
    <name type="scientific">Methanothermus fervidus</name>
    <dbReference type="NCBI Taxonomy" id="2180"/>
    <lineage>
        <taxon>Archaea</taxon>
        <taxon>Methanobacteriati</taxon>
        <taxon>Methanobacteriota</taxon>
        <taxon>Methanomada group</taxon>
        <taxon>Methanobacteria</taxon>
        <taxon>Methanobacteriales</taxon>
        <taxon>Methanothermaceae</taxon>
        <taxon>Methanothermus</taxon>
    </lineage>
</organism>
<accession>P12974</accession>
<keyword id="KW-0484">Methanogenesis</keyword>
<name>MCRD_METFE</name>
<proteinExistence type="predicted"/>
<comment type="subunit">
    <text>MCR is composed of three subunits: alpha, beta, and gamma. The function of proteins C and D is not known.</text>
</comment>
<gene>
    <name type="primary">mcrD</name>
</gene>
<sequence>MDVEIFPHRLLSAETTEKLLNKLGEIEGIKRMIIQGQRLPAGEHPDRRVINVKGQDIELKVKTGRIFVEIEDKKTMEKIKEVCDEVFPFKYELIPGTFFRRQKTVTDAIKFGKDVDKLPTELVGMTDTVLD</sequence>
<protein>
    <recommendedName>
        <fullName>Methyl-coenzyme M reductase operon protein D</fullName>
    </recommendedName>
</protein>
<reference key="1">
    <citation type="journal article" date="1988" name="J. Bacteriol.">
        <title>Structure and comparative analysis of the genes encoding component C of methyl coenzyme M reductase in the extremely thermophilic archaebacterium Methanothermus fervidus.</title>
        <authorList>
            <person name="Weil C.F."/>
            <person name="Cram D.S."/>
            <person name="Sherf B.A."/>
            <person name="Reeve J.N."/>
        </authorList>
    </citation>
    <scope>NUCLEOTIDE SEQUENCE [GENOMIC DNA]</scope>
</reference>
<feature type="chain" id="PRO_0000147492" description="Methyl-coenzyme M reductase operon protein D">
    <location>
        <begin position="1"/>
        <end position="131"/>
    </location>
</feature>